<reference key="1">
    <citation type="journal article" date="1999" name="Mol. Phylogenet. Evol.">
        <title>The tribal radiation of the family Bovidae (Artiodactyla) and the evolution of the mitochondrial cytochrome b gene.</title>
        <authorList>
            <person name="Hassanin A."/>
            <person name="Douzery E.J.P."/>
        </authorList>
    </citation>
    <scope>NUCLEOTIDE SEQUENCE [GENOMIC DNA]</scope>
</reference>
<proteinExistence type="inferred from homology"/>
<evidence type="ECO:0000250" key="1"/>
<evidence type="ECO:0000250" key="2">
    <source>
        <dbReference type="UniProtKB" id="P00157"/>
    </source>
</evidence>
<evidence type="ECO:0000255" key="3">
    <source>
        <dbReference type="PROSITE-ProRule" id="PRU00967"/>
    </source>
</evidence>
<evidence type="ECO:0000255" key="4">
    <source>
        <dbReference type="PROSITE-ProRule" id="PRU00968"/>
    </source>
</evidence>
<gene>
    <name type="primary">MT-CYB</name>
    <name type="synonym">COB</name>
    <name type="synonym">CYTB</name>
    <name type="synonym">MTCYB</name>
</gene>
<comment type="function">
    <text evidence="2">Component of the ubiquinol-cytochrome c reductase complex (complex III or cytochrome b-c1 complex) that is part of the mitochondrial respiratory chain. The b-c1 complex mediates electron transfer from ubiquinol to cytochrome c. Contributes to the generation of a proton gradient across the mitochondrial membrane that is then used for ATP synthesis.</text>
</comment>
<comment type="cofactor">
    <cofactor evidence="2">
        <name>heme b</name>
        <dbReference type="ChEBI" id="CHEBI:60344"/>
    </cofactor>
    <text evidence="2">Binds 2 heme b groups non-covalently.</text>
</comment>
<comment type="subunit">
    <text evidence="2">The cytochrome bc1 complex contains 11 subunits: 3 respiratory subunits (MT-CYB, CYC1 and UQCRFS1), 2 core proteins (UQCRC1 and UQCRC2) and 6 low-molecular weight proteins (UQCRH/QCR6, UQCRB/QCR7, UQCRQ/QCR8, UQCR10/QCR9, UQCR11/QCR10 and a cleavage product of UQCRFS1). This cytochrome bc1 complex then forms a dimer.</text>
</comment>
<comment type="subcellular location">
    <subcellularLocation>
        <location evidence="2">Mitochondrion inner membrane</location>
        <topology evidence="2">Multi-pass membrane protein</topology>
    </subcellularLocation>
</comment>
<comment type="miscellaneous">
    <text evidence="1">Heme 1 (or BL or b562) is low-potential and absorbs at about 562 nm, and heme 2 (or BH or b566) is high-potential and absorbs at about 566 nm.</text>
</comment>
<comment type="similarity">
    <text evidence="3 4">Belongs to the cytochrome b family.</text>
</comment>
<comment type="caution">
    <text evidence="2">The full-length protein contains only eight transmembrane helices, not nine as predicted by bioinformatics tools.</text>
</comment>
<organism>
    <name type="scientific">Bison bison</name>
    <name type="common">American bison</name>
    <name type="synonym">Bos bison</name>
    <dbReference type="NCBI Taxonomy" id="9901"/>
    <lineage>
        <taxon>Eukaryota</taxon>
        <taxon>Metazoa</taxon>
        <taxon>Chordata</taxon>
        <taxon>Craniata</taxon>
        <taxon>Vertebrata</taxon>
        <taxon>Euteleostomi</taxon>
        <taxon>Mammalia</taxon>
        <taxon>Eutheria</taxon>
        <taxon>Laurasiatheria</taxon>
        <taxon>Artiodactyla</taxon>
        <taxon>Ruminantia</taxon>
        <taxon>Pecora</taxon>
        <taxon>Bovidae</taxon>
        <taxon>Bovinae</taxon>
        <taxon>Bison</taxon>
    </lineage>
</organism>
<sequence length="379" mass="42686">MTNLRKSHPLMKIVNNAFIDLPAPSNISSWWNFGSLLGMCLILXILTGLFLAMHYTSDTTTAFSSVAHICRDVNYGWIIRYMHANGASMFFICLYMHAGRGLYYGSYTFLETWNIGVILLLTVMATAFMGYDLPWGQMSFWGATVITNLLSAIPYIGTNLVEWIWGGFSVDKATLTRFFAFHFILPFIIMAIAMVHLLFLHETGSNNPTGISSDMDKIPFHPYYTIKDILGALLLILALMLLVLFTPDLLGDPDNYTPANPLNTPPHIKPEWYFLFAYAILRSIPNKLGGVLALAFSILILALIPLLHTSKQRSMIFRPLSQCLFWTLVADLLTLTWIGGQPVEHPYIIIGQMASIMYFLLILVLMPTAGTIENKLLKW</sequence>
<accession>Q9T9C1</accession>
<feature type="chain" id="PRO_0000060672" description="Cytochrome b">
    <location>
        <begin position="1"/>
        <end position="379"/>
    </location>
</feature>
<feature type="transmembrane region" description="Helical" evidence="2">
    <location>
        <begin position="33"/>
        <end position="53"/>
    </location>
</feature>
<feature type="transmembrane region" description="Helical" evidence="2">
    <location>
        <begin position="77"/>
        <end position="98"/>
    </location>
</feature>
<feature type="transmembrane region" description="Helical" evidence="2">
    <location>
        <begin position="113"/>
        <end position="133"/>
    </location>
</feature>
<feature type="transmembrane region" description="Helical" evidence="2">
    <location>
        <begin position="178"/>
        <end position="198"/>
    </location>
</feature>
<feature type="transmembrane region" description="Helical" evidence="2">
    <location>
        <begin position="226"/>
        <end position="246"/>
    </location>
</feature>
<feature type="transmembrane region" description="Helical" evidence="2">
    <location>
        <begin position="288"/>
        <end position="308"/>
    </location>
</feature>
<feature type="transmembrane region" description="Helical" evidence="2">
    <location>
        <begin position="320"/>
        <end position="340"/>
    </location>
</feature>
<feature type="transmembrane region" description="Helical" evidence="2">
    <location>
        <begin position="347"/>
        <end position="367"/>
    </location>
</feature>
<feature type="binding site" description="axial binding residue" evidence="2">
    <location>
        <position position="83"/>
    </location>
    <ligand>
        <name>heme b</name>
        <dbReference type="ChEBI" id="CHEBI:60344"/>
        <label>b562</label>
    </ligand>
    <ligandPart>
        <name>Fe</name>
        <dbReference type="ChEBI" id="CHEBI:18248"/>
    </ligandPart>
</feature>
<feature type="binding site" description="axial binding residue" evidence="2">
    <location>
        <position position="97"/>
    </location>
    <ligand>
        <name>heme b</name>
        <dbReference type="ChEBI" id="CHEBI:60344"/>
        <label>b566</label>
    </ligand>
    <ligandPart>
        <name>Fe</name>
        <dbReference type="ChEBI" id="CHEBI:18248"/>
    </ligandPart>
</feature>
<feature type="binding site" description="axial binding residue" evidence="2">
    <location>
        <position position="182"/>
    </location>
    <ligand>
        <name>heme b</name>
        <dbReference type="ChEBI" id="CHEBI:60344"/>
        <label>b562</label>
    </ligand>
    <ligandPart>
        <name>Fe</name>
        <dbReference type="ChEBI" id="CHEBI:18248"/>
    </ligandPart>
</feature>
<feature type="binding site" description="axial binding residue" evidence="2">
    <location>
        <position position="196"/>
    </location>
    <ligand>
        <name>heme b</name>
        <dbReference type="ChEBI" id="CHEBI:60344"/>
        <label>b566</label>
    </ligand>
    <ligandPart>
        <name>Fe</name>
        <dbReference type="ChEBI" id="CHEBI:18248"/>
    </ligandPart>
</feature>
<feature type="binding site" evidence="2">
    <location>
        <position position="201"/>
    </location>
    <ligand>
        <name>a ubiquinone</name>
        <dbReference type="ChEBI" id="CHEBI:16389"/>
    </ligand>
</feature>
<keyword id="KW-0249">Electron transport</keyword>
<keyword id="KW-0349">Heme</keyword>
<keyword id="KW-0408">Iron</keyword>
<keyword id="KW-0472">Membrane</keyword>
<keyword id="KW-0479">Metal-binding</keyword>
<keyword id="KW-0496">Mitochondrion</keyword>
<keyword id="KW-0999">Mitochondrion inner membrane</keyword>
<keyword id="KW-0679">Respiratory chain</keyword>
<keyword id="KW-0812">Transmembrane</keyword>
<keyword id="KW-1133">Transmembrane helix</keyword>
<keyword id="KW-0813">Transport</keyword>
<keyword id="KW-0830">Ubiquinone</keyword>
<geneLocation type="mitochondrion"/>
<protein>
    <recommendedName>
        <fullName>Cytochrome b</fullName>
    </recommendedName>
    <alternativeName>
        <fullName>Complex III subunit 3</fullName>
    </alternativeName>
    <alternativeName>
        <fullName>Complex III subunit III</fullName>
    </alternativeName>
    <alternativeName>
        <fullName>Cytochrome b-c1 complex subunit 3</fullName>
    </alternativeName>
    <alternativeName>
        <fullName>Ubiquinol-cytochrome-c reductase complex cytochrome b subunit</fullName>
    </alternativeName>
</protein>
<dbReference type="EMBL" id="AF036273">
    <property type="protein sequence ID" value="AAD51424.1"/>
    <property type="molecule type" value="Genomic_DNA"/>
</dbReference>
<dbReference type="GO" id="GO:0005743">
    <property type="term" value="C:mitochondrial inner membrane"/>
    <property type="evidence" value="ECO:0007669"/>
    <property type="project" value="UniProtKB-SubCell"/>
</dbReference>
<dbReference type="GO" id="GO:0045275">
    <property type="term" value="C:respiratory chain complex III"/>
    <property type="evidence" value="ECO:0007669"/>
    <property type="project" value="InterPro"/>
</dbReference>
<dbReference type="GO" id="GO:0046872">
    <property type="term" value="F:metal ion binding"/>
    <property type="evidence" value="ECO:0007669"/>
    <property type="project" value="UniProtKB-KW"/>
</dbReference>
<dbReference type="GO" id="GO:0008121">
    <property type="term" value="F:ubiquinol-cytochrome-c reductase activity"/>
    <property type="evidence" value="ECO:0007669"/>
    <property type="project" value="InterPro"/>
</dbReference>
<dbReference type="GO" id="GO:0006122">
    <property type="term" value="P:mitochondrial electron transport, ubiquinol to cytochrome c"/>
    <property type="evidence" value="ECO:0007669"/>
    <property type="project" value="TreeGrafter"/>
</dbReference>
<dbReference type="CDD" id="cd00290">
    <property type="entry name" value="cytochrome_b_C"/>
    <property type="match status" value="1"/>
</dbReference>
<dbReference type="CDD" id="cd00284">
    <property type="entry name" value="Cytochrome_b_N"/>
    <property type="match status" value="1"/>
</dbReference>
<dbReference type="FunFam" id="1.20.810.10:FF:000002">
    <property type="entry name" value="Cytochrome b"/>
    <property type="match status" value="1"/>
</dbReference>
<dbReference type="Gene3D" id="1.20.810.10">
    <property type="entry name" value="Cytochrome Bc1 Complex, Chain C"/>
    <property type="match status" value="1"/>
</dbReference>
<dbReference type="InterPro" id="IPR005798">
    <property type="entry name" value="Cyt_b/b6_C"/>
</dbReference>
<dbReference type="InterPro" id="IPR036150">
    <property type="entry name" value="Cyt_b/b6_C_sf"/>
</dbReference>
<dbReference type="InterPro" id="IPR005797">
    <property type="entry name" value="Cyt_b/b6_N"/>
</dbReference>
<dbReference type="InterPro" id="IPR027387">
    <property type="entry name" value="Cytb/b6-like_sf"/>
</dbReference>
<dbReference type="InterPro" id="IPR030689">
    <property type="entry name" value="Cytochrome_b"/>
</dbReference>
<dbReference type="InterPro" id="IPR048260">
    <property type="entry name" value="Cytochrome_b_C_euk/bac"/>
</dbReference>
<dbReference type="InterPro" id="IPR048259">
    <property type="entry name" value="Cytochrome_b_N_euk/bac"/>
</dbReference>
<dbReference type="InterPro" id="IPR016174">
    <property type="entry name" value="Di-haem_cyt_TM"/>
</dbReference>
<dbReference type="PANTHER" id="PTHR19271">
    <property type="entry name" value="CYTOCHROME B"/>
    <property type="match status" value="1"/>
</dbReference>
<dbReference type="PANTHER" id="PTHR19271:SF16">
    <property type="entry name" value="CYTOCHROME B"/>
    <property type="match status" value="1"/>
</dbReference>
<dbReference type="Pfam" id="PF00032">
    <property type="entry name" value="Cytochrom_B_C"/>
    <property type="match status" value="1"/>
</dbReference>
<dbReference type="Pfam" id="PF00033">
    <property type="entry name" value="Cytochrome_B"/>
    <property type="match status" value="1"/>
</dbReference>
<dbReference type="PIRSF" id="PIRSF038885">
    <property type="entry name" value="COB"/>
    <property type="match status" value="1"/>
</dbReference>
<dbReference type="SUPFAM" id="SSF81648">
    <property type="entry name" value="a domain/subunit of cytochrome bc1 complex (Ubiquinol-cytochrome c reductase)"/>
    <property type="match status" value="1"/>
</dbReference>
<dbReference type="SUPFAM" id="SSF81342">
    <property type="entry name" value="Transmembrane di-heme cytochromes"/>
    <property type="match status" value="1"/>
</dbReference>
<dbReference type="PROSITE" id="PS51003">
    <property type="entry name" value="CYTB_CTER"/>
    <property type="match status" value="1"/>
</dbReference>
<dbReference type="PROSITE" id="PS51002">
    <property type="entry name" value="CYTB_NTER"/>
    <property type="match status" value="1"/>
</dbReference>
<name>CYB_BISBI</name>